<evidence type="ECO:0000250" key="1"/>
<evidence type="ECO:0000250" key="2">
    <source>
        <dbReference type="UniProtKB" id="P70604"/>
    </source>
</evidence>
<evidence type="ECO:0000250" key="3">
    <source>
        <dbReference type="UniProtKB" id="P70605"/>
    </source>
</evidence>
<evidence type="ECO:0000250" key="4">
    <source>
        <dbReference type="UniProtKB" id="Q9UGI6"/>
    </source>
</evidence>
<evidence type="ECO:0000255" key="5"/>
<evidence type="ECO:0000256" key="6">
    <source>
        <dbReference type="SAM" id="MobiDB-lite"/>
    </source>
</evidence>
<evidence type="ECO:0000269" key="7">
    <source>
    </source>
</evidence>
<evidence type="ECO:0000269" key="8">
    <source>
    </source>
</evidence>
<evidence type="ECO:0000269" key="9">
    <source>
    </source>
</evidence>
<evidence type="ECO:0000305" key="10"/>
<evidence type="ECO:0000312" key="11">
    <source>
        <dbReference type="MGI" id="MGI:2153183"/>
    </source>
</evidence>
<evidence type="ECO:0007744" key="12">
    <source>
    </source>
</evidence>
<keyword id="KW-0112">Calmodulin-binding</keyword>
<keyword id="KW-1003">Cell membrane</keyword>
<keyword id="KW-0175">Coiled coil</keyword>
<keyword id="KW-0963">Cytoplasm</keyword>
<keyword id="KW-0407">Ion channel</keyword>
<keyword id="KW-0406">Ion transport</keyword>
<keyword id="KW-0472">Membrane</keyword>
<keyword id="KW-0597">Phosphoprotein</keyword>
<keyword id="KW-1185">Reference proteome</keyword>
<keyword id="KW-0812">Transmembrane</keyword>
<keyword id="KW-1133">Transmembrane helix</keyword>
<keyword id="KW-0813">Transport</keyword>
<name>KCNN3_MOUSE</name>
<reference key="1">
    <citation type="journal article" date="2001" name="Am. J. Physiol.">
        <title>Molecular properties of small-conductance Ca2+-activated K+ channels expressed in murine colonic smooth muscle.</title>
        <authorList>
            <person name="Ro S."/>
            <person name="Hatton W.J."/>
            <person name="Koh S.D."/>
            <person name="Horowitz B."/>
        </authorList>
    </citation>
    <scope>NUCLEOTIDE SEQUENCE [MRNA]</scope>
    <scope>FUNCTION</scope>
    <scope>TRANSPORTER ACTIVITY</scope>
    <scope>ACTIVITY REGULATION</scope>
    <scope>SUBCELLULAR LOCATION</scope>
    <source>
        <strain>BALB/cJ</strain>
        <tissue>Colon</tissue>
    </source>
</reference>
<reference key="2">
    <citation type="journal article" date="2005" name="Science">
        <title>The transcriptional landscape of the mammalian genome.</title>
        <authorList>
            <person name="Carninci P."/>
            <person name="Kasukawa T."/>
            <person name="Katayama S."/>
            <person name="Gough J."/>
            <person name="Frith M.C."/>
            <person name="Maeda N."/>
            <person name="Oyama R."/>
            <person name="Ravasi T."/>
            <person name="Lenhard B."/>
            <person name="Wells C."/>
            <person name="Kodzius R."/>
            <person name="Shimokawa K."/>
            <person name="Bajic V.B."/>
            <person name="Brenner S.E."/>
            <person name="Batalov S."/>
            <person name="Forrest A.R."/>
            <person name="Zavolan M."/>
            <person name="Davis M.J."/>
            <person name="Wilming L.G."/>
            <person name="Aidinis V."/>
            <person name="Allen J.E."/>
            <person name="Ambesi-Impiombato A."/>
            <person name="Apweiler R."/>
            <person name="Aturaliya R.N."/>
            <person name="Bailey T.L."/>
            <person name="Bansal M."/>
            <person name="Baxter L."/>
            <person name="Beisel K.W."/>
            <person name="Bersano T."/>
            <person name="Bono H."/>
            <person name="Chalk A.M."/>
            <person name="Chiu K.P."/>
            <person name="Choudhary V."/>
            <person name="Christoffels A."/>
            <person name="Clutterbuck D.R."/>
            <person name="Crowe M.L."/>
            <person name="Dalla E."/>
            <person name="Dalrymple B.P."/>
            <person name="de Bono B."/>
            <person name="Della Gatta G."/>
            <person name="di Bernardo D."/>
            <person name="Down T."/>
            <person name="Engstrom P."/>
            <person name="Fagiolini M."/>
            <person name="Faulkner G."/>
            <person name="Fletcher C.F."/>
            <person name="Fukushima T."/>
            <person name="Furuno M."/>
            <person name="Futaki S."/>
            <person name="Gariboldi M."/>
            <person name="Georgii-Hemming P."/>
            <person name="Gingeras T.R."/>
            <person name="Gojobori T."/>
            <person name="Green R.E."/>
            <person name="Gustincich S."/>
            <person name="Harbers M."/>
            <person name="Hayashi Y."/>
            <person name="Hensch T.K."/>
            <person name="Hirokawa N."/>
            <person name="Hill D."/>
            <person name="Huminiecki L."/>
            <person name="Iacono M."/>
            <person name="Ikeo K."/>
            <person name="Iwama A."/>
            <person name="Ishikawa T."/>
            <person name="Jakt M."/>
            <person name="Kanapin A."/>
            <person name="Katoh M."/>
            <person name="Kawasawa Y."/>
            <person name="Kelso J."/>
            <person name="Kitamura H."/>
            <person name="Kitano H."/>
            <person name="Kollias G."/>
            <person name="Krishnan S.P."/>
            <person name="Kruger A."/>
            <person name="Kummerfeld S.K."/>
            <person name="Kurochkin I.V."/>
            <person name="Lareau L.F."/>
            <person name="Lazarevic D."/>
            <person name="Lipovich L."/>
            <person name="Liu J."/>
            <person name="Liuni S."/>
            <person name="McWilliam S."/>
            <person name="Madan Babu M."/>
            <person name="Madera M."/>
            <person name="Marchionni L."/>
            <person name="Matsuda H."/>
            <person name="Matsuzawa S."/>
            <person name="Miki H."/>
            <person name="Mignone F."/>
            <person name="Miyake S."/>
            <person name="Morris K."/>
            <person name="Mottagui-Tabar S."/>
            <person name="Mulder N."/>
            <person name="Nakano N."/>
            <person name="Nakauchi H."/>
            <person name="Ng P."/>
            <person name="Nilsson R."/>
            <person name="Nishiguchi S."/>
            <person name="Nishikawa S."/>
            <person name="Nori F."/>
            <person name="Ohara O."/>
            <person name="Okazaki Y."/>
            <person name="Orlando V."/>
            <person name="Pang K.C."/>
            <person name="Pavan W.J."/>
            <person name="Pavesi G."/>
            <person name="Pesole G."/>
            <person name="Petrovsky N."/>
            <person name="Piazza S."/>
            <person name="Reed J."/>
            <person name="Reid J.F."/>
            <person name="Ring B.Z."/>
            <person name="Ringwald M."/>
            <person name="Rost B."/>
            <person name="Ruan Y."/>
            <person name="Salzberg S.L."/>
            <person name="Sandelin A."/>
            <person name="Schneider C."/>
            <person name="Schoenbach C."/>
            <person name="Sekiguchi K."/>
            <person name="Semple C.A."/>
            <person name="Seno S."/>
            <person name="Sessa L."/>
            <person name="Sheng Y."/>
            <person name="Shibata Y."/>
            <person name="Shimada H."/>
            <person name="Shimada K."/>
            <person name="Silva D."/>
            <person name="Sinclair B."/>
            <person name="Sperling S."/>
            <person name="Stupka E."/>
            <person name="Sugiura K."/>
            <person name="Sultana R."/>
            <person name="Takenaka Y."/>
            <person name="Taki K."/>
            <person name="Tammoja K."/>
            <person name="Tan S.L."/>
            <person name="Tang S."/>
            <person name="Taylor M.S."/>
            <person name="Tegner J."/>
            <person name="Teichmann S.A."/>
            <person name="Ueda H.R."/>
            <person name="van Nimwegen E."/>
            <person name="Verardo R."/>
            <person name="Wei C.L."/>
            <person name="Yagi K."/>
            <person name="Yamanishi H."/>
            <person name="Zabarovsky E."/>
            <person name="Zhu S."/>
            <person name="Zimmer A."/>
            <person name="Hide W."/>
            <person name="Bult C."/>
            <person name="Grimmond S.M."/>
            <person name="Teasdale R.D."/>
            <person name="Liu E.T."/>
            <person name="Brusic V."/>
            <person name="Quackenbush J."/>
            <person name="Wahlestedt C."/>
            <person name="Mattick J.S."/>
            <person name="Hume D.A."/>
            <person name="Kai C."/>
            <person name="Sasaki D."/>
            <person name="Tomaru Y."/>
            <person name="Fukuda S."/>
            <person name="Kanamori-Katayama M."/>
            <person name="Suzuki M."/>
            <person name="Aoki J."/>
            <person name="Arakawa T."/>
            <person name="Iida J."/>
            <person name="Imamura K."/>
            <person name="Itoh M."/>
            <person name="Kato T."/>
            <person name="Kawaji H."/>
            <person name="Kawagashira N."/>
            <person name="Kawashima T."/>
            <person name="Kojima M."/>
            <person name="Kondo S."/>
            <person name="Konno H."/>
            <person name="Nakano K."/>
            <person name="Ninomiya N."/>
            <person name="Nishio T."/>
            <person name="Okada M."/>
            <person name="Plessy C."/>
            <person name="Shibata K."/>
            <person name="Shiraki T."/>
            <person name="Suzuki S."/>
            <person name="Tagami M."/>
            <person name="Waki K."/>
            <person name="Watahiki A."/>
            <person name="Okamura-Oho Y."/>
            <person name="Suzuki H."/>
            <person name="Kawai J."/>
            <person name="Hayashizaki Y."/>
        </authorList>
    </citation>
    <scope>NUCLEOTIDE SEQUENCE [LARGE SCALE MRNA]</scope>
    <source>
        <strain>C57BL/6J</strain>
        <tissue>Skin</tissue>
    </source>
</reference>
<reference key="3">
    <citation type="journal article" date="2009" name="PLoS Biol.">
        <title>Lineage-specific biology revealed by a finished genome assembly of the mouse.</title>
        <authorList>
            <person name="Church D.M."/>
            <person name="Goodstadt L."/>
            <person name="Hillier L.W."/>
            <person name="Zody M.C."/>
            <person name="Goldstein S."/>
            <person name="She X."/>
            <person name="Bult C.J."/>
            <person name="Agarwala R."/>
            <person name="Cherry J.L."/>
            <person name="DiCuccio M."/>
            <person name="Hlavina W."/>
            <person name="Kapustin Y."/>
            <person name="Meric P."/>
            <person name="Maglott D."/>
            <person name="Birtle Z."/>
            <person name="Marques A.C."/>
            <person name="Graves T."/>
            <person name="Zhou S."/>
            <person name="Teague B."/>
            <person name="Potamousis K."/>
            <person name="Churas C."/>
            <person name="Place M."/>
            <person name="Herschleb J."/>
            <person name="Runnheim R."/>
            <person name="Forrest D."/>
            <person name="Amos-Landgraf J."/>
            <person name="Schwartz D.C."/>
            <person name="Cheng Z."/>
            <person name="Lindblad-Toh K."/>
            <person name="Eichler E.E."/>
            <person name="Ponting C.P."/>
        </authorList>
    </citation>
    <scope>NUCLEOTIDE SEQUENCE [LARGE SCALE GENOMIC DNA]</scope>
    <source>
        <strain>C57BL/6J</strain>
    </source>
</reference>
<reference key="4">
    <citation type="journal article" date="2004" name="Genome Res.">
        <title>The status, quality, and expansion of the NIH full-length cDNA project: the Mammalian Gene Collection (MGC).</title>
        <authorList>
            <consortium name="The MGC Project Team"/>
        </authorList>
    </citation>
    <scope>NUCLEOTIDE SEQUENCE [LARGE SCALE MRNA]</scope>
</reference>
<reference key="5">
    <citation type="journal article" date="2005" name="Am. J. Physiol.">
        <title>Differential expression of small-conductance Ca2+-activated K+ channels SK1, SK2, and SK3 in mouse atrial and ventricular myocytes.</title>
        <authorList>
            <person name="Tuteja D."/>
            <person name="Xu D."/>
            <person name="Timofeyev V."/>
            <person name="Lu L."/>
            <person name="Sharma D."/>
            <person name="Zhang Z."/>
            <person name="Xu Y."/>
            <person name="Nie L."/>
            <person name="Vazquez A.E."/>
            <person name="Young J.N."/>
            <person name="Glatter K.A."/>
            <person name="Chiamvimonvat N."/>
        </authorList>
    </citation>
    <scope>TISSUE SPECIFICITY</scope>
</reference>
<reference key="6">
    <citation type="journal article" date="2010" name="Cell">
        <title>A tissue-specific atlas of mouse protein phosphorylation and expression.</title>
        <authorList>
            <person name="Huttlin E.L."/>
            <person name="Jedrychowski M.P."/>
            <person name="Elias J.E."/>
            <person name="Goswami T."/>
            <person name="Rad R."/>
            <person name="Beausoleil S.A."/>
            <person name="Villen J."/>
            <person name="Haas W."/>
            <person name="Sowa M.E."/>
            <person name="Gygi S.P."/>
        </authorList>
    </citation>
    <scope>PHOSPHORYLATION [LARGE SCALE ANALYSIS] AT SER-168</scope>
    <scope>IDENTIFICATION BY MASS SPECTROMETRY [LARGE SCALE ANALYSIS]</scope>
    <source>
        <tissue>Brain</tissue>
        <tissue>Kidney</tissue>
    </source>
</reference>
<reference key="7">
    <citation type="journal article" date="2010" name="Circ. Res.">
        <title>Cardiac small conductance Ca2+-activated K+ channel subunits form heteromultimers via the coiled-coil domains in the C termini of the channels.</title>
        <authorList>
            <person name="Tuteja D."/>
            <person name="Rafizadeh S."/>
            <person name="Timofeyev V."/>
            <person name="Wang S."/>
            <person name="Zhang Z."/>
            <person name="Li N."/>
            <person name="Mateo R.K."/>
            <person name="Singapuri A."/>
            <person name="Young J.N."/>
            <person name="Knowlton A.A."/>
            <person name="Chiamvimonvat N."/>
        </authorList>
    </citation>
    <scope>SUBUNIT</scope>
    <scope>SUBCELLULAR LOCATION</scope>
    <scope>TISSUE SPECIFICITY</scope>
</reference>
<organism>
    <name type="scientific">Mus musculus</name>
    <name type="common">Mouse</name>
    <dbReference type="NCBI Taxonomy" id="10090"/>
    <lineage>
        <taxon>Eukaryota</taxon>
        <taxon>Metazoa</taxon>
        <taxon>Chordata</taxon>
        <taxon>Craniata</taxon>
        <taxon>Vertebrata</taxon>
        <taxon>Euteleostomi</taxon>
        <taxon>Mammalia</taxon>
        <taxon>Eutheria</taxon>
        <taxon>Euarchontoglires</taxon>
        <taxon>Glires</taxon>
        <taxon>Rodentia</taxon>
        <taxon>Myomorpha</taxon>
        <taxon>Muroidea</taxon>
        <taxon>Muridae</taxon>
        <taxon>Murinae</taxon>
        <taxon>Mus</taxon>
        <taxon>Mus</taxon>
    </lineage>
</organism>
<sequence>MDTSGHFHDSGVGDLDEDPKCPCPSSGDEQQQQQQPPPPPAPPAVPQQPPGPLLQPQPPQPQQQQSQQQQQQQSQQQQQQAPLHPLPQLAQLQSQLVHPGLLHSSPTAFRAPTSANSTAILHPSSRQGSQLNLNDHLLGHSPSSTATSGPGGGSRHRQASPLVHRRDSNPFTEIAMSSCKYSGGVMKPLSRLSASRRNLIEAEPEGQPLQLFSPSNPPEIIISSREDNHAHQTLLHHPNATHNHQHAGTTAGSTTFPKANKRKNQNIGYKLGHRRALFEKRKRLSDYALIFGMFGIVVMVIETELSWGLYSKDSMFSLALKCLISLSTVILLGLIIAYHTREVQLFVIDNGADDWRIAMTYERILYISLEMLVCAIHPIPGEYKFFWTARLAFSYTPSRAEADVDIILSIPMFLRLYLIARVMLLHSKLFTDASSRSIGALNKINFNTRFVMKTLMTICPGTVLLVFSISLWIIAAWTVRVCERYHDQQDVTSNFLGAMWLISITFLSIGYGDMVPHTYCGKGVCLLTGIMGAGCTALVVAVVARKLELTKAEKHVHNFMMDTQLTKRIKNAAANVLRETWLIYKHTKLLKKIDHAKVRKHQRKFLQAIHQLRGVKMEQRKLSDQANTLVDLSKMQNVMYDLITELNDRSEDLEKQIGSLESKLEHLTASFNSLPLLIADTLRQQQQQLLTAFVEARGISVAVGTSHAPPSDSPIGISSTSFPTPYTSSSSC</sequence>
<comment type="function">
    <text evidence="3 4 7">Small conductance calcium-activated potassium channel that mediates the voltage-independent transmembrane transfer of potassium across the cell membrane through a constitutive interaction with calmodulin which binds the intracellular calcium allowing its opening (PubMed:11557517). The current is characterized by a voltage-independent activation, an intracellular calcium concentration increase-dependent activation and a single-channel conductance of 10 picosiemens (PubMed:11557517). Also presents an inwardly rectifying current, thus reducing its already small outward conductance of potassium ions, which is particularly the case when the membrane potential displays positive values, above + 20 mV (By similarity). Activation is followed by membrane hyperpolarization. Thought to regulate neuronal excitability by contributing to the slow component of synaptic afterhyperpolarization (By similarity).</text>
</comment>
<comment type="catalytic activity">
    <reaction evidence="7">
        <text>K(+)(in) = K(+)(out)</text>
        <dbReference type="Rhea" id="RHEA:29463"/>
        <dbReference type="ChEBI" id="CHEBI:29103"/>
    </reaction>
</comment>
<comment type="activity regulation">
    <text evidence="7">Inhibited by bee venom neurotoxin apamin.</text>
</comment>
<comment type="subunit">
    <text evidence="2 4 9">Homodimer (PubMed:20689065). Heteromultimer with KCNN2 or KCNN1; this modulates plasma membrane expression and consequently the small conductance calcium-activated potassium channel activity (PubMed:20689065). The complex is composed of 4 channel subunits each of which binds to a calmodulin subunit which regulates the channel activity through calcium-binding (By similarity). Interacts with CALM1 (By similarity).</text>
</comment>
<comment type="subcellular location">
    <subcellularLocation>
        <location evidence="7">Cell membrane</location>
        <topology evidence="5">Multi-pass membrane protein</topology>
    </subcellularLocation>
    <subcellularLocation>
        <location evidence="9">Cytoplasm</location>
        <location evidence="9">Myofibril</location>
        <location evidence="9">Sarcomere</location>
        <location evidence="9">Z line</location>
    </subcellularLocation>
</comment>
<comment type="tissue specificity">
    <text evidence="8 9">Expressed at low levels in atrial and ventricular myocytes (at protein level).</text>
</comment>
<comment type="domain">
    <text evidence="4">The coiled-coil domaim mediates heteromeic assembly.</text>
</comment>
<comment type="similarity">
    <text evidence="10">Belongs to the potassium channel KCNN family. KCa2.3/KCNN3 subfamily.</text>
</comment>
<protein>
    <recommendedName>
        <fullName evidence="10">Small conductance calcium-activated potassium channel protein 3</fullName>
        <shortName>SK3</shortName>
        <shortName>SKCa 3</shortName>
        <shortName>SKCa3</shortName>
    </recommendedName>
    <alternativeName>
        <fullName>KCa2.3</fullName>
    </alternativeName>
</protein>
<proteinExistence type="evidence at protein level"/>
<dbReference type="EMBL" id="AF357241">
    <property type="protein sequence ID" value="AAK48902.1"/>
    <property type="molecule type" value="mRNA"/>
</dbReference>
<dbReference type="EMBL" id="AK137738">
    <property type="protein sequence ID" value="BAE23484.1"/>
    <property type="molecule type" value="mRNA"/>
</dbReference>
<dbReference type="EMBL" id="AC166364">
    <property type="status" value="NOT_ANNOTATED_CDS"/>
    <property type="molecule type" value="Genomic_DNA"/>
</dbReference>
<dbReference type="EMBL" id="AC171273">
    <property type="status" value="NOT_ANNOTATED_CDS"/>
    <property type="molecule type" value="Genomic_DNA"/>
</dbReference>
<dbReference type="EMBL" id="BC106769">
    <property type="protein sequence ID" value="AAI06770.1"/>
    <property type="molecule type" value="mRNA"/>
</dbReference>
<dbReference type="EMBL" id="BC106770">
    <property type="protein sequence ID" value="AAI06771.1"/>
    <property type="molecule type" value="mRNA"/>
</dbReference>
<dbReference type="CCDS" id="CCDS38495.1"/>
<dbReference type="RefSeq" id="NP_536714.2">
    <property type="nucleotide sequence ID" value="NM_080466.2"/>
</dbReference>
<dbReference type="SMR" id="P58391"/>
<dbReference type="FunCoup" id="P58391">
    <property type="interactions" value="240"/>
</dbReference>
<dbReference type="STRING" id="10090.ENSMUSP00000000811"/>
<dbReference type="GuidetoPHARMACOLOGY" id="383"/>
<dbReference type="GlyGen" id="P58391">
    <property type="glycosylation" value="2 sites, 1 O-linked glycan (2 sites)"/>
</dbReference>
<dbReference type="iPTMnet" id="P58391"/>
<dbReference type="PhosphoSitePlus" id="P58391"/>
<dbReference type="PaxDb" id="10090-ENSMUSP00000000811"/>
<dbReference type="PeptideAtlas" id="P58391"/>
<dbReference type="ProteomicsDB" id="268963"/>
<dbReference type="Antibodypedia" id="20402">
    <property type="antibodies" value="185 antibodies from 28 providers"/>
</dbReference>
<dbReference type="DNASU" id="140493"/>
<dbReference type="Ensembl" id="ENSMUST00000000811.8">
    <property type="protein sequence ID" value="ENSMUSP00000000811.8"/>
    <property type="gene ID" value="ENSMUSG00000000794.10"/>
</dbReference>
<dbReference type="GeneID" id="140493"/>
<dbReference type="KEGG" id="mmu:140493"/>
<dbReference type="UCSC" id="uc012cso.1">
    <property type="organism name" value="mouse"/>
</dbReference>
<dbReference type="AGR" id="MGI:2153183"/>
<dbReference type="CTD" id="3782"/>
<dbReference type="MGI" id="MGI:2153183">
    <property type="gene designation" value="Kcnn3"/>
</dbReference>
<dbReference type="VEuPathDB" id="HostDB:ENSMUSG00000000794"/>
<dbReference type="eggNOG" id="KOG3684">
    <property type="taxonomic scope" value="Eukaryota"/>
</dbReference>
<dbReference type="GeneTree" id="ENSGT00950000182904"/>
<dbReference type="HOGENOM" id="CLU_014617_1_2_1"/>
<dbReference type="InParanoid" id="P58391"/>
<dbReference type="OMA" id="TVRVCEX"/>
<dbReference type="OrthoDB" id="73653at2759"/>
<dbReference type="PhylomeDB" id="P58391"/>
<dbReference type="TreeFam" id="TF315015"/>
<dbReference type="Reactome" id="R-MMU-1296052">
    <property type="pathway name" value="Ca2+ activated K+ channels"/>
</dbReference>
<dbReference type="BioGRID-ORCS" id="140493">
    <property type="hits" value="3 hits in 77 CRISPR screens"/>
</dbReference>
<dbReference type="ChiTaRS" id="Kcnn3">
    <property type="organism name" value="mouse"/>
</dbReference>
<dbReference type="PRO" id="PR:P58391"/>
<dbReference type="Proteomes" id="UP000000589">
    <property type="component" value="Chromosome 3"/>
</dbReference>
<dbReference type="RNAct" id="P58391">
    <property type="molecule type" value="protein"/>
</dbReference>
<dbReference type="Bgee" id="ENSMUSG00000000794">
    <property type="expression patterns" value="Expressed in embryonic brain and 49 other cell types or tissues"/>
</dbReference>
<dbReference type="GO" id="GO:0005737">
    <property type="term" value="C:cytoplasm"/>
    <property type="evidence" value="ECO:0000314"/>
    <property type="project" value="MGI"/>
</dbReference>
<dbReference type="GO" id="GO:0005886">
    <property type="term" value="C:plasma membrane"/>
    <property type="evidence" value="ECO:0000314"/>
    <property type="project" value="MGI"/>
</dbReference>
<dbReference type="GO" id="GO:0030018">
    <property type="term" value="C:Z disc"/>
    <property type="evidence" value="ECO:0007669"/>
    <property type="project" value="UniProtKB-SubCell"/>
</dbReference>
<dbReference type="GO" id="GO:0005516">
    <property type="term" value="F:calmodulin binding"/>
    <property type="evidence" value="ECO:0007669"/>
    <property type="project" value="UniProtKB-KW"/>
</dbReference>
<dbReference type="GO" id="GO:0005242">
    <property type="term" value="F:inward rectifier potassium channel activity"/>
    <property type="evidence" value="ECO:0007669"/>
    <property type="project" value="Ensembl"/>
</dbReference>
<dbReference type="GO" id="GO:0016286">
    <property type="term" value="F:small conductance calcium-activated potassium channel activity"/>
    <property type="evidence" value="ECO:0007669"/>
    <property type="project" value="Ensembl"/>
</dbReference>
<dbReference type="FunFam" id="1.10.287.70:FF:000022">
    <property type="entry name" value="Small conductance calcium-activated potassium channel, isoform O"/>
    <property type="match status" value="1"/>
</dbReference>
<dbReference type="FunFam" id="1.10.287.70:FF:000027">
    <property type="entry name" value="Small conductance calcium-activated potassium channel, isoform O"/>
    <property type="match status" value="1"/>
</dbReference>
<dbReference type="Gene3D" id="1.10.287.70">
    <property type="match status" value="2"/>
</dbReference>
<dbReference type="InterPro" id="IPR004178">
    <property type="entry name" value="CaM-bd_dom"/>
</dbReference>
<dbReference type="InterPro" id="IPR036122">
    <property type="entry name" value="CaM-bd_dom_sf"/>
</dbReference>
<dbReference type="InterPro" id="IPR015449">
    <property type="entry name" value="K_chnl_Ca-activ_SK"/>
</dbReference>
<dbReference type="InterPro" id="IPR013099">
    <property type="entry name" value="K_chnl_dom"/>
</dbReference>
<dbReference type="PANTHER" id="PTHR10153">
    <property type="entry name" value="SMALL CONDUCTANCE CALCIUM-ACTIVATED POTASSIUM CHANNEL"/>
    <property type="match status" value="1"/>
</dbReference>
<dbReference type="Pfam" id="PF02888">
    <property type="entry name" value="CaMBD"/>
    <property type="match status" value="1"/>
</dbReference>
<dbReference type="Pfam" id="PF07885">
    <property type="entry name" value="Ion_trans_2"/>
    <property type="match status" value="1"/>
</dbReference>
<dbReference type="Pfam" id="PF03530">
    <property type="entry name" value="SK_channel"/>
    <property type="match status" value="1"/>
</dbReference>
<dbReference type="PRINTS" id="PR01451">
    <property type="entry name" value="SKCHANNEL"/>
</dbReference>
<dbReference type="SMART" id="SM01053">
    <property type="entry name" value="CaMBD"/>
    <property type="match status" value="1"/>
</dbReference>
<dbReference type="SUPFAM" id="SSF81995">
    <property type="entry name" value="beta-sandwich domain of Sec23/24"/>
    <property type="match status" value="1"/>
</dbReference>
<dbReference type="SUPFAM" id="SSF81327">
    <property type="entry name" value="Small-conductance potassium channel"/>
    <property type="match status" value="1"/>
</dbReference>
<dbReference type="SUPFAM" id="SSF81324">
    <property type="entry name" value="Voltage-gated potassium channels"/>
    <property type="match status" value="1"/>
</dbReference>
<accession>P58391</accession>
<accession>Q3UUY9</accession>
<feature type="chain" id="PRO_0000155014" description="Small conductance calcium-activated potassium channel protein 3">
    <location>
        <begin position="1"/>
        <end position="732"/>
    </location>
</feature>
<feature type="transmembrane region" description="Helical; Name=Segment S1" evidence="5">
    <location>
        <begin position="289"/>
        <end position="309"/>
    </location>
</feature>
<feature type="transmembrane region" description="Helical; Name=Segment S2" evidence="5">
    <location>
        <begin position="316"/>
        <end position="336"/>
    </location>
</feature>
<feature type="transmembrane region" description="Helical; Name=Segment S3" evidence="5">
    <location>
        <begin position="367"/>
        <end position="387"/>
    </location>
</feature>
<feature type="transmembrane region" description="Helical; Name=Segment S4" evidence="5">
    <location>
        <begin position="406"/>
        <end position="426"/>
    </location>
</feature>
<feature type="transmembrane region" description="Helical; Name=Segment S5" evidence="5">
    <location>
        <begin position="455"/>
        <end position="475"/>
    </location>
</feature>
<feature type="intramembrane region" description="Pore-forming; Name=Segment H5" evidence="5">
    <location>
        <begin position="495"/>
        <end position="515"/>
    </location>
</feature>
<feature type="transmembrane region" description="Helical; Name=Segment S6" evidence="5">
    <location>
        <begin position="524"/>
        <end position="544"/>
    </location>
</feature>
<feature type="region of interest" description="Disordered" evidence="6">
    <location>
        <begin position="1"/>
        <end position="82"/>
    </location>
</feature>
<feature type="region of interest" description="Disordered" evidence="6">
    <location>
        <begin position="119"/>
        <end position="161"/>
    </location>
</feature>
<feature type="region of interest" description="Disordered" evidence="6">
    <location>
        <begin position="241"/>
        <end position="260"/>
    </location>
</feature>
<feature type="region of interest" description="Calmodulin-binding" evidence="1">
    <location>
        <begin position="562"/>
        <end position="638"/>
    </location>
</feature>
<feature type="region of interest" description="Disordered" evidence="6">
    <location>
        <begin position="704"/>
        <end position="732"/>
    </location>
</feature>
<feature type="coiled-coil region" evidence="5">
    <location>
        <begin position="643"/>
        <end position="670"/>
    </location>
</feature>
<feature type="compositionally biased region" description="Basic and acidic residues" evidence="6">
    <location>
        <begin position="1"/>
        <end position="11"/>
    </location>
</feature>
<feature type="compositionally biased region" description="Pro residues" evidence="6">
    <location>
        <begin position="35"/>
        <end position="61"/>
    </location>
</feature>
<feature type="compositionally biased region" description="Low complexity" evidence="6">
    <location>
        <begin position="62"/>
        <end position="82"/>
    </location>
</feature>
<feature type="compositionally biased region" description="Polar residues" evidence="6">
    <location>
        <begin position="119"/>
        <end position="133"/>
    </location>
</feature>
<feature type="compositionally biased region" description="Low complexity" evidence="6">
    <location>
        <begin position="139"/>
        <end position="148"/>
    </location>
</feature>
<feature type="compositionally biased region" description="Polar residues" evidence="6">
    <location>
        <begin position="241"/>
        <end position="257"/>
    </location>
</feature>
<feature type="compositionally biased region" description="Low complexity" evidence="6">
    <location>
        <begin position="718"/>
        <end position="732"/>
    </location>
</feature>
<feature type="modified residue" description="Phosphoserine" evidence="12">
    <location>
        <position position="168"/>
    </location>
</feature>
<feature type="sequence conflict" description="In Ref. 1; AAK48902." evidence="10" ref="1">
    <location>
        <position position="80"/>
    </location>
</feature>
<feature type="sequence conflict" description="In Ref. 1; AAK48902." evidence="10" ref="1">
    <original>L</original>
    <variation>F</variation>
    <location>
        <position position="365"/>
    </location>
</feature>
<feature type="sequence conflict" description="In Ref. 1; AAK48902." evidence="10" ref="1">
    <original>A</original>
    <variation>T</variation>
    <location>
        <position position="574"/>
    </location>
</feature>
<feature type="sequence conflict" description="In Ref. 1; AAK48902." evidence="10" ref="1">
    <original>I</original>
    <variation>V</variation>
    <location>
        <position position="583"/>
    </location>
</feature>
<gene>
    <name evidence="11" type="primary">Kcnn3</name>
    <name type="synonym">Sk3</name>
</gene>